<protein>
    <recommendedName>
        <fullName evidence="1">Dihydroxy-acid dehydratase</fullName>
        <shortName evidence="1">DAD</shortName>
        <ecNumber evidence="1">4.2.1.9</ecNumber>
    </recommendedName>
</protein>
<dbReference type="EC" id="4.2.1.9" evidence="1"/>
<dbReference type="EMBL" id="CP000050">
    <property type="protein sequence ID" value="AAY47441.1"/>
    <property type="molecule type" value="Genomic_DNA"/>
</dbReference>
<dbReference type="RefSeq" id="WP_011035599.1">
    <property type="nucleotide sequence ID" value="NZ_CP155948.1"/>
</dbReference>
<dbReference type="SMR" id="Q4UZT2"/>
<dbReference type="KEGG" id="xcb:XC_0356"/>
<dbReference type="HOGENOM" id="CLU_014271_4_2_6"/>
<dbReference type="UniPathway" id="UPA00047">
    <property type="reaction ID" value="UER00057"/>
</dbReference>
<dbReference type="UniPathway" id="UPA00049">
    <property type="reaction ID" value="UER00061"/>
</dbReference>
<dbReference type="Proteomes" id="UP000000420">
    <property type="component" value="Chromosome"/>
</dbReference>
<dbReference type="GO" id="GO:0005829">
    <property type="term" value="C:cytosol"/>
    <property type="evidence" value="ECO:0007669"/>
    <property type="project" value="TreeGrafter"/>
</dbReference>
<dbReference type="GO" id="GO:0051537">
    <property type="term" value="F:2 iron, 2 sulfur cluster binding"/>
    <property type="evidence" value="ECO:0007669"/>
    <property type="project" value="UniProtKB-UniRule"/>
</dbReference>
<dbReference type="GO" id="GO:0004160">
    <property type="term" value="F:dihydroxy-acid dehydratase activity"/>
    <property type="evidence" value="ECO:0007669"/>
    <property type="project" value="UniProtKB-UniRule"/>
</dbReference>
<dbReference type="GO" id="GO:0000287">
    <property type="term" value="F:magnesium ion binding"/>
    <property type="evidence" value="ECO:0007669"/>
    <property type="project" value="UniProtKB-UniRule"/>
</dbReference>
<dbReference type="GO" id="GO:0009097">
    <property type="term" value="P:isoleucine biosynthetic process"/>
    <property type="evidence" value="ECO:0007669"/>
    <property type="project" value="UniProtKB-UniRule"/>
</dbReference>
<dbReference type="GO" id="GO:0009099">
    <property type="term" value="P:L-valine biosynthetic process"/>
    <property type="evidence" value="ECO:0007669"/>
    <property type="project" value="UniProtKB-UniRule"/>
</dbReference>
<dbReference type="FunFam" id="3.50.30.80:FF:000001">
    <property type="entry name" value="Dihydroxy-acid dehydratase"/>
    <property type="match status" value="1"/>
</dbReference>
<dbReference type="Gene3D" id="3.50.30.80">
    <property type="entry name" value="IlvD/EDD C-terminal domain-like"/>
    <property type="match status" value="1"/>
</dbReference>
<dbReference type="HAMAP" id="MF_00012">
    <property type="entry name" value="IlvD"/>
    <property type="match status" value="1"/>
</dbReference>
<dbReference type="InterPro" id="IPR042096">
    <property type="entry name" value="Dihydro-acid_dehy_C"/>
</dbReference>
<dbReference type="InterPro" id="IPR004404">
    <property type="entry name" value="DihydroxyA_deHydtase"/>
</dbReference>
<dbReference type="InterPro" id="IPR020558">
    <property type="entry name" value="DiOHA_6PGluconate_deHydtase_CS"/>
</dbReference>
<dbReference type="InterPro" id="IPR056740">
    <property type="entry name" value="ILV_EDD_C"/>
</dbReference>
<dbReference type="InterPro" id="IPR000581">
    <property type="entry name" value="ILV_EDD_N"/>
</dbReference>
<dbReference type="InterPro" id="IPR037237">
    <property type="entry name" value="IlvD/EDD_N"/>
</dbReference>
<dbReference type="NCBIfam" id="TIGR00110">
    <property type="entry name" value="ilvD"/>
    <property type="match status" value="1"/>
</dbReference>
<dbReference type="NCBIfam" id="NF009103">
    <property type="entry name" value="PRK12448.1"/>
    <property type="match status" value="1"/>
</dbReference>
<dbReference type="PANTHER" id="PTHR43661">
    <property type="entry name" value="D-XYLONATE DEHYDRATASE"/>
    <property type="match status" value="1"/>
</dbReference>
<dbReference type="PANTHER" id="PTHR43661:SF3">
    <property type="entry name" value="D-XYLONATE DEHYDRATASE YAGF-RELATED"/>
    <property type="match status" value="1"/>
</dbReference>
<dbReference type="Pfam" id="PF24877">
    <property type="entry name" value="ILV_EDD_C"/>
    <property type="match status" value="1"/>
</dbReference>
<dbReference type="Pfam" id="PF00920">
    <property type="entry name" value="ILVD_EDD_N"/>
    <property type="match status" value="1"/>
</dbReference>
<dbReference type="SUPFAM" id="SSF143975">
    <property type="entry name" value="IlvD/EDD N-terminal domain-like"/>
    <property type="match status" value="1"/>
</dbReference>
<dbReference type="SUPFAM" id="SSF52016">
    <property type="entry name" value="LeuD/IlvD-like"/>
    <property type="match status" value="1"/>
</dbReference>
<dbReference type="PROSITE" id="PS00886">
    <property type="entry name" value="ILVD_EDD_1"/>
    <property type="match status" value="1"/>
</dbReference>
<dbReference type="PROSITE" id="PS00887">
    <property type="entry name" value="ILVD_EDD_2"/>
    <property type="match status" value="1"/>
</dbReference>
<comment type="function">
    <text evidence="1">Functions in the biosynthesis of branched-chain amino acids. Catalyzes the dehydration of (2R,3R)-2,3-dihydroxy-3-methylpentanoate (2,3-dihydroxy-3-methylvalerate) into 2-oxo-3-methylpentanoate (2-oxo-3-methylvalerate) and of (2R)-2,3-dihydroxy-3-methylbutanoate (2,3-dihydroxyisovalerate) into 2-oxo-3-methylbutanoate (2-oxoisovalerate), the penultimate precursor to L-isoleucine and L-valine, respectively.</text>
</comment>
<comment type="catalytic activity">
    <reaction evidence="1">
        <text>(2R)-2,3-dihydroxy-3-methylbutanoate = 3-methyl-2-oxobutanoate + H2O</text>
        <dbReference type="Rhea" id="RHEA:24809"/>
        <dbReference type="ChEBI" id="CHEBI:11851"/>
        <dbReference type="ChEBI" id="CHEBI:15377"/>
        <dbReference type="ChEBI" id="CHEBI:49072"/>
        <dbReference type="EC" id="4.2.1.9"/>
    </reaction>
    <physiologicalReaction direction="left-to-right" evidence="1">
        <dbReference type="Rhea" id="RHEA:24810"/>
    </physiologicalReaction>
</comment>
<comment type="catalytic activity">
    <reaction evidence="1">
        <text>(2R,3R)-2,3-dihydroxy-3-methylpentanoate = (S)-3-methyl-2-oxopentanoate + H2O</text>
        <dbReference type="Rhea" id="RHEA:27694"/>
        <dbReference type="ChEBI" id="CHEBI:15377"/>
        <dbReference type="ChEBI" id="CHEBI:35146"/>
        <dbReference type="ChEBI" id="CHEBI:49258"/>
        <dbReference type="EC" id="4.2.1.9"/>
    </reaction>
    <physiologicalReaction direction="left-to-right" evidence="1">
        <dbReference type="Rhea" id="RHEA:27695"/>
    </physiologicalReaction>
</comment>
<comment type="cofactor">
    <cofactor evidence="1">
        <name>[2Fe-2S] cluster</name>
        <dbReference type="ChEBI" id="CHEBI:190135"/>
    </cofactor>
    <text evidence="1">Binds 1 [2Fe-2S] cluster per subunit. This cluster acts as a Lewis acid cofactor.</text>
</comment>
<comment type="cofactor">
    <cofactor evidence="1">
        <name>Mg(2+)</name>
        <dbReference type="ChEBI" id="CHEBI:18420"/>
    </cofactor>
</comment>
<comment type="pathway">
    <text evidence="1">Amino-acid biosynthesis; L-isoleucine biosynthesis; L-isoleucine from 2-oxobutanoate: step 3/4.</text>
</comment>
<comment type="pathway">
    <text evidence="1">Amino-acid biosynthesis; L-valine biosynthesis; L-valine from pyruvate: step 3/4.</text>
</comment>
<comment type="subunit">
    <text evidence="1">Homodimer.</text>
</comment>
<comment type="similarity">
    <text evidence="1">Belongs to the IlvD/Edd family.</text>
</comment>
<keyword id="KW-0001">2Fe-2S</keyword>
<keyword id="KW-0028">Amino-acid biosynthesis</keyword>
<keyword id="KW-0100">Branched-chain amino acid biosynthesis</keyword>
<keyword id="KW-0408">Iron</keyword>
<keyword id="KW-0411">Iron-sulfur</keyword>
<keyword id="KW-0456">Lyase</keyword>
<keyword id="KW-0460">Magnesium</keyword>
<keyword id="KW-0479">Metal-binding</keyword>
<sequence>MPEYRSKTSTHGRNMAGARALWRATGMKDGDFHKPIIAIANSFTQFVPGHVHLKDLGQLVAREIERVGGVAKEFDTIAVDDGIAMGHDGMLYSLPSREIIADSVEYMVNAHCADALVCISNCDKITPGMLMAALRLNIPTVFVSGGPMEAGKTKLADHNLDLIDAMVIAADDSASDEKVAEFERSACPTCGSCSGMFTANSMNCLTEALGLSLPGNGTVVATHADREQLFLRAGRVAVELCHRWYGGEDPTALPRGIATFEAFENAMTLDIAMGGSTNTILHLLAAAQEGEVPFGMRDIDRLSKRVPQLCKVAPNTPKYHIEDVHRAGGIMSILGELARGGLLHTNAATVHTRTLADAIAQWDVTQVDDDKVHTFYKAGPAGIPTQIAFSQATRWDTLDTDRSEGCIRDVAHAFSQEGGLAVLYGNIARDGCVVKTAGVDESIHVFEGNTRVYESQDSAVKGILADEVKAGDVVVIRYEGPKGGPGMQEMLYPTSYLKSKGLGKHCALLTDGRFSGGTSGLSIGHASPEAAAGGAIGLVRNGDKILIDIPKRSIDLLVSDEELAARRTEQDAKGWKPVEVRPRKVTTALKAYALLATSADKGAVRDKAMLDG</sequence>
<accession>Q4UZT2</accession>
<feature type="chain" id="PRO_0000225435" description="Dihydroxy-acid dehydratase">
    <location>
        <begin position="1"/>
        <end position="612"/>
    </location>
</feature>
<feature type="active site" description="Proton acceptor" evidence="1">
    <location>
        <position position="515"/>
    </location>
</feature>
<feature type="binding site" evidence="1">
    <location>
        <position position="81"/>
    </location>
    <ligand>
        <name>Mg(2+)</name>
        <dbReference type="ChEBI" id="CHEBI:18420"/>
    </ligand>
</feature>
<feature type="binding site" evidence="1">
    <location>
        <position position="122"/>
    </location>
    <ligand>
        <name>[2Fe-2S] cluster</name>
        <dbReference type="ChEBI" id="CHEBI:190135"/>
    </ligand>
</feature>
<feature type="binding site" evidence="1">
    <location>
        <position position="123"/>
    </location>
    <ligand>
        <name>Mg(2+)</name>
        <dbReference type="ChEBI" id="CHEBI:18420"/>
    </ligand>
</feature>
<feature type="binding site" description="via carbamate group" evidence="1">
    <location>
        <position position="124"/>
    </location>
    <ligand>
        <name>Mg(2+)</name>
        <dbReference type="ChEBI" id="CHEBI:18420"/>
    </ligand>
</feature>
<feature type="binding site" evidence="1">
    <location>
        <position position="193"/>
    </location>
    <ligand>
        <name>[2Fe-2S] cluster</name>
        <dbReference type="ChEBI" id="CHEBI:190135"/>
    </ligand>
</feature>
<feature type="binding site" evidence="1">
    <location>
        <position position="489"/>
    </location>
    <ligand>
        <name>Mg(2+)</name>
        <dbReference type="ChEBI" id="CHEBI:18420"/>
    </ligand>
</feature>
<feature type="modified residue" description="N6-carboxylysine" evidence="1">
    <location>
        <position position="124"/>
    </location>
</feature>
<gene>
    <name evidence="1" type="primary">ilvD</name>
    <name type="ordered locus">XC_0356</name>
</gene>
<proteinExistence type="inferred from homology"/>
<reference key="1">
    <citation type="journal article" date="2005" name="Genome Res.">
        <title>Comparative and functional genomic analyses of the pathogenicity of phytopathogen Xanthomonas campestris pv. campestris.</title>
        <authorList>
            <person name="Qian W."/>
            <person name="Jia Y."/>
            <person name="Ren S.-X."/>
            <person name="He Y.-Q."/>
            <person name="Feng J.-X."/>
            <person name="Lu L.-F."/>
            <person name="Sun Q."/>
            <person name="Ying G."/>
            <person name="Tang D.-J."/>
            <person name="Tang H."/>
            <person name="Wu W."/>
            <person name="Hao P."/>
            <person name="Wang L."/>
            <person name="Jiang B.-L."/>
            <person name="Zeng S."/>
            <person name="Gu W.-Y."/>
            <person name="Lu G."/>
            <person name="Rong L."/>
            <person name="Tian Y."/>
            <person name="Yao Z."/>
            <person name="Fu G."/>
            <person name="Chen B."/>
            <person name="Fang R."/>
            <person name="Qiang B."/>
            <person name="Chen Z."/>
            <person name="Zhao G.-P."/>
            <person name="Tang J.-L."/>
            <person name="He C."/>
        </authorList>
    </citation>
    <scope>NUCLEOTIDE SEQUENCE [LARGE SCALE GENOMIC DNA]</scope>
    <source>
        <strain>8004</strain>
    </source>
</reference>
<organism>
    <name type="scientific">Xanthomonas campestris pv. campestris (strain 8004)</name>
    <dbReference type="NCBI Taxonomy" id="314565"/>
    <lineage>
        <taxon>Bacteria</taxon>
        <taxon>Pseudomonadati</taxon>
        <taxon>Pseudomonadota</taxon>
        <taxon>Gammaproteobacteria</taxon>
        <taxon>Lysobacterales</taxon>
        <taxon>Lysobacteraceae</taxon>
        <taxon>Xanthomonas</taxon>
    </lineage>
</organism>
<evidence type="ECO:0000255" key="1">
    <source>
        <dbReference type="HAMAP-Rule" id="MF_00012"/>
    </source>
</evidence>
<name>ILVD_XANC8</name>